<reference key="1">
    <citation type="journal article" date="1997" name="DNA Res.">
        <title>Structural analysis of Arabidopsis thaliana chromosome 5. III. Sequence features of the regions of 1,191,918 bp covered by seventeen physically assigned P1 clones.</title>
        <authorList>
            <person name="Nakamura Y."/>
            <person name="Sato S."/>
            <person name="Kaneko T."/>
            <person name="Kotani H."/>
            <person name="Asamizu E."/>
            <person name="Miyajima N."/>
            <person name="Tabata S."/>
        </authorList>
    </citation>
    <scope>NUCLEOTIDE SEQUENCE [LARGE SCALE GENOMIC DNA]</scope>
    <source>
        <strain>cv. Columbia</strain>
    </source>
</reference>
<reference key="2">
    <citation type="journal article" date="2000" name="Nature">
        <title>Sequence and analysis of chromosome 5 of the plant Arabidopsis thaliana.</title>
        <authorList>
            <person name="Tabata S."/>
            <person name="Kaneko T."/>
            <person name="Nakamura Y."/>
            <person name="Kotani H."/>
            <person name="Kato T."/>
            <person name="Asamizu E."/>
            <person name="Miyajima N."/>
            <person name="Sasamoto S."/>
            <person name="Kimura T."/>
            <person name="Hosouchi T."/>
            <person name="Kawashima K."/>
            <person name="Kohara M."/>
            <person name="Matsumoto M."/>
            <person name="Matsuno A."/>
            <person name="Muraki A."/>
            <person name="Nakayama S."/>
            <person name="Nakazaki N."/>
            <person name="Naruo K."/>
            <person name="Okumura S."/>
            <person name="Shinpo S."/>
            <person name="Takeuchi C."/>
            <person name="Wada T."/>
            <person name="Watanabe A."/>
            <person name="Yamada M."/>
            <person name="Yasuda M."/>
            <person name="Sato S."/>
            <person name="de la Bastide M."/>
            <person name="Huang E."/>
            <person name="Spiegel L."/>
            <person name="Gnoj L."/>
            <person name="O'Shaughnessy A."/>
            <person name="Preston R."/>
            <person name="Habermann K."/>
            <person name="Murray J."/>
            <person name="Johnson D."/>
            <person name="Rohlfing T."/>
            <person name="Nelson J."/>
            <person name="Stoneking T."/>
            <person name="Pepin K."/>
            <person name="Spieth J."/>
            <person name="Sekhon M."/>
            <person name="Armstrong J."/>
            <person name="Becker M."/>
            <person name="Belter E."/>
            <person name="Cordum H."/>
            <person name="Cordes M."/>
            <person name="Courtney L."/>
            <person name="Courtney W."/>
            <person name="Dante M."/>
            <person name="Du H."/>
            <person name="Edwards J."/>
            <person name="Fryman J."/>
            <person name="Haakensen B."/>
            <person name="Lamar E."/>
            <person name="Latreille P."/>
            <person name="Leonard S."/>
            <person name="Meyer R."/>
            <person name="Mulvaney E."/>
            <person name="Ozersky P."/>
            <person name="Riley A."/>
            <person name="Strowmatt C."/>
            <person name="Wagner-McPherson C."/>
            <person name="Wollam A."/>
            <person name="Yoakum M."/>
            <person name="Bell M."/>
            <person name="Dedhia N."/>
            <person name="Parnell L."/>
            <person name="Shah R."/>
            <person name="Rodriguez M."/>
            <person name="Hoon See L."/>
            <person name="Vil D."/>
            <person name="Baker J."/>
            <person name="Kirchoff K."/>
            <person name="Toth K."/>
            <person name="King L."/>
            <person name="Bahret A."/>
            <person name="Miller B."/>
            <person name="Marra M.A."/>
            <person name="Martienssen R."/>
            <person name="McCombie W.R."/>
            <person name="Wilson R.K."/>
            <person name="Murphy G."/>
            <person name="Bancroft I."/>
            <person name="Volckaert G."/>
            <person name="Wambutt R."/>
            <person name="Duesterhoeft A."/>
            <person name="Stiekema W."/>
            <person name="Pohl T."/>
            <person name="Entian K.-D."/>
            <person name="Terryn N."/>
            <person name="Hartley N."/>
            <person name="Bent E."/>
            <person name="Johnson S."/>
            <person name="Langham S.-A."/>
            <person name="McCullagh B."/>
            <person name="Robben J."/>
            <person name="Grymonprez B."/>
            <person name="Zimmermann W."/>
            <person name="Ramsperger U."/>
            <person name="Wedler H."/>
            <person name="Balke K."/>
            <person name="Wedler E."/>
            <person name="Peters S."/>
            <person name="van Staveren M."/>
            <person name="Dirkse W."/>
            <person name="Mooijman P."/>
            <person name="Klein Lankhorst R."/>
            <person name="Weitzenegger T."/>
            <person name="Bothe G."/>
            <person name="Rose M."/>
            <person name="Hauf J."/>
            <person name="Berneiser S."/>
            <person name="Hempel S."/>
            <person name="Feldpausch M."/>
            <person name="Lamberth S."/>
            <person name="Villarroel R."/>
            <person name="Gielen J."/>
            <person name="Ardiles W."/>
            <person name="Bents O."/>
            <person name="Lemcke K."/>
            <person name="Kolesov G."/>
            <person name="Mayer K.F.X."/>
            <person name="Rudd S."/>
            <person name="Schoof H."/>
            <person name="Schueller C."/>
            <person name="Zaccaria P."/>
            <person name="Mewes H.-W."/>
            <person name="Bevan M."/>
            <person name="Fransz P.F."/>
        </authorList>
    </citation>
    <scope>NUCLEOTIDE SEQUENCE [LARGE SCALE GENOMIC DNA]</scope>
    <source>
        <strain>cv. Columbia</strain>
    </source>
</reference>
<reference key="3">
    <citation type="journal article" date="2017" name="Plant J.">
        <title>Araport11: a complete reannotation of the Arabidopsis thaliana reference genome.</title>
        <authorList>
            <person name="Cheng C.Y."/>
            <person name="Krishnakumar V."/>
            <person name="Chan A.P."/>
            <person name="Thibaud-Nissen F."/>
            <person name="Schobel S."/>
            <person name="Town C.D."/>
        </authorList>
    </citation>
    <scope>GENOME REANNOTATION</scope>
    <source>
        <strain>cv. Columbia</strain>
    </source>
</reference>
<reference key="4">
    <citation type="journal article" date="2003" name="Science">
        <title>Empirical analysis of transcriptional activity in the Arabidopsis genome.</title>
        <authorList>
            <person name="Yamada K."/>
            <person name="Lim J."/>
            <person name="Dale J.M."/>
            <person name="Chen H."/>
            <person name="Shinn P."/>
            <person name="Palm C.J."/>
            <person name="Southwick A.M."/>
            <person name="Wu H.C."/>
            <person name="Kim C.J."/>
            <person name="Nguyen M."/>
            <person name="Pham P.K."/>
            <person name="Cheuk R.F."/>
            <person name="Karlin-Newmann G."/>
            <person name="Liu S.X."/>
            <person name="Lam B."/>
            <person name="Sakano H."/>
            <person name="Wu T."/>
            <person name="Yu G."/>
            <person name="Miranda M."/>
            <person name="Quach H.L."/>
            <person name="Tripp M."/>
            <person name="Chang C.H."/>
            <person name="Lee J.M."/>
            <person name="Toriumi M.J."/>
            <person name="Chan M.M."/>
            <person name="Tang C.C."/>
            <person name="Onodera C.S."/>
            <person name="Deng J.M."/>
            <person name="Akiyama K."/>
            <person name="Ansari Y."/>
            <person name="Arakawa T."/>
            <person name="Banh J."/>
            <person name="Banno F."/>
            <person name="Bowser L."/>
            <person name="Brooks S.Y."/>
            <person name="Carninci P."/>
            <person name="Chao Q."/>
            <person name="Choy N."/>
            <person name="Enju A."/>
            <person name="Goldsmith A.D."/>
            <person name="Gurjal M."/>
            <person name="Hansen N.F."/>
            <person name="Hayashizaki Y."/>
            <person name="Johnson-Hopson C."/>
            <person name="Hsuan V.W."/>
            <person name="Iida K."/>
            <person name="Karnes M."/>
            <person name="Khan S."/>
            <person name="Koesema E."/>
            <person name="Ishida J."/>
            <person name="Jiang P.X."/>
            <person name="Jones T."/>
            <person name="Kawai J."/>
            <person name="Kamiya A."/>
            <person name="Meyers C."/>
            <person name="Nakajima M."/>
            <person name="Narusaka M."/>
            <person name="Seki M."/>
            <person name="Sakurai T."/>
            <person name="Satou M."/>
            <person name="Tamse R."/>
            <person name="Vaysberg M."/>
            <person name="Wallender E.K."/>
            <person name="Wong C."/>
            <person name="Yamamura Y."/>
            <person name="Yuan S."/>
            <person name="Shinozaki K."/>
            <person name="Davis R.W."/>
            <person name="Theologis A."/>
            <person name="Ecker J.R."/>
        </authorList>
    </citation>
    <scope>NUCLEOTIDE SEQUENCE [LARGE SCALE MRNA]</scope>
    <source>
        <strain>cv. Columbia</strain>
    </source>
</reference>
<feature type="chain" id="PRO_0000212762" description="Probable disease resistance protein At5g04720">
    <location>
        <begin position="1"/>
        <end position="811"/>
    </location>
</feature>
<feature type="domain" description="RPW8" evidence="3">
    <location>
        <begin position="1"/>
        <end position="147"/>
    </location>
</feature>
<feature type="domain" description="NB-ARC 1">
    <location>
        <begin position="180"/>
        <end position="242"/>
    </location>
</feature>
<feature type="domain" description="NB-ARC 2">
    <location>
        <begin position="312"/>
        <end position="437"/>
    </location>
</feature>
<feature type="repeat" description="LRR 1">
    <location>
        <begin position="650"/>
        <end position="674"/>
    </location>
</feature>
<feature type="repeat" description="LRR 3">
    <location>
        <begin position="676"/>
        <end position="699"/>
    </location>
</feature>
<feature type="repeat" description="LRR 3">
    <location>
        <begin position="700"/>
        <end position="722"/>
    </location>
</feature>
<feature type="repeat" description="LRR 4">
    <location>
        <begin position="724"/>
        <end position="746"/>
    </location>
</feature>
<feature type="repeat" description="LRR 5">
    <location>
        <begin position="748"/>
        <end position="769"/>
    </location>
</feature>
<feature type="binding site" evidence="2">
    <location>
        <begin position="207"/>
        <end position="214"/>
    </location>
    <ligand>
        <name>ATP</name>
        <dbReference type="ChEBI" id="CHEBI:30616"/>
    </ligand>
</feature>
<evidence type="ECO:0000250" key="1"/>
<evidence type="ECO:0000255" key="2"/>
<evidence type="ECO:0000255" key="3">
    <source>
        <dbReference type="PROSITE-ProRule" id="PRU00495"/>
    </source>
</evidence>
<evidence type="ECO:0000305" key="4"/>
<keyword id="KW-0067">ATP-binding</keyword>
<keyword id="KW-0433">Leucine-rich repeat</keyword>
<keyword id="KW-0547">Nucleotide-binding</keyword>
<keyword id="KW-0611">Plant defense</keyword>
<keyword id="KW-1185">Reference proteome</keyword>
<keyword id="KW-0677">Repeat</keyword>
<accession>Q9LZ25</accession>
<sequence>MADIIGGEVVTELVRQLYAVSQKTLRCRGIAKNLATMIDGLQPTIKEIQYSGVELTPHRQAQLRMFSETLDKCRKLTEKVLKSSRWNMVRQLLHVRKMENLQSKVSSFLNGQLLVHVLADVHHVRADSEFRFDRIDRKVDSLNEKLGSMKLRGSESLREALKTAEATVEMVTTDGADLGVGLDLGKRKVKEMLFKSIDGERLIGISGMSGSGKTTLAKELARDEEVRGHFGNKVLFLTVSQSPNLEELRAHIWGFLTSYEAGVGATLPESRKLVILDDVWTRESLDQLMFENIPGTTTLVVSRSKLADSRVTYDVELLNEHEATALFCLSVFNQKLVPSGFSQSLVKQVVGECKGLPLSLKVIGASLKERPEKYWEGAVERLSRGEPADETHESRVFAQIEATLENLDPKTRDCFLVLGAFPEDKKIPLDVLINVLVELHDLEDATAFAVIVDLANRNLLTLVKDPRFGHMYTSYYDIFVTQHDVLRDVALRLSNHGKVNNRERLLMPKRESMLPREWERNNDEPYKARVVSIHTGEMTQMDWFDMELPKAEVLILHFSSDKYVLPPFIAKMGKLTALVIINNGMSPARLHDFSIFTNLAKLKSLWLQRVHVPELSSSTVPLQNLHKLSLIFCKINTSLDQTELDIAQIFPKLSDLTIDHCDDLLELPSTICGITSLNSISITNCPRIKELPKNLSKLKALQLLRLYACHELNSLPVEICELPRLKYVDISQCVSLSSLPEKIGKVKTLEKIDTRECSLSSIPNSVVLLTSLRHVICDREALWMWEKVQKAVAGLRVEAAEKSFSRDWLDD</sequence>
<protein>
    <recommendedName>
        <fullName>Probable disease resistance protein At5g04720</fullName>
    </recommendedName>
</protein>
<comment type="function">
    <text evidence="1">Probable disease resistance protein.</text>
</comment>
<comment type="domain">
    <text evidence="1">The LRR repeats probably act as specificity determinant of pathogen recognition.</text>
</comment>
<comment type="similarity">
    <text evidence="4">Belongs to the disease resistance NB-LRR family.</text>
</comment>
<comment type="online information" name="NIB-LRRS">
    <link uri="http://niblrrs.ucdavis.edu"/>
    <text>Functional and comparative genomics of disease resistance gene homologs</text>
</comment>
<name>DRL30_ARATH</name>
<organism>
    <name type="scientific">Arabidopsis thaliana</name>
    <name type="common">Mouse-ear cress</name>
    <dbReference type="NCBI Taxonomy" id="3702"/>
    <lineage>
        <taxon>Eukaryota</taxon>
        <taxon>Viridiplantae</taxon>
        <taxon>Streptophyta</taxon>
        <taxon>Embryophyta</taxon>
        <taxon>Tracheophyta</taxon>
        <taxon>Spermatophyta</taxon>
        <taxon>Magnoliopsida</taxon>
        <taxon>eudicotyledons</taxon>
        <taxon>Gunneridae</taxon>
        <taxon>Pentapetalae</taxon>
        <taxon>rosids</taxon>
        <taxon>malvids</taxon>
        <taxon>Brassicales</taxon>
        <taxon>Brassicaceae</taxon>
        <taxon>Camelineae</taxon>
        <taxon>Arabidopsis</taxon>
    </lineage>
</organism>
<proteinExistence type="evidence at transcript level"/>
<dbReference type="EMBL" id="AB008271">
    <property type="protein sequence ID" value="BAB08976.1"/>
    <property type="molecule type" value="Genomic_DNA"/>
</dbReference>
<dbReference type="EMBL" id="AL162972">
    <property type="protein sequence ID" value="CAB86014.1"/>
    <property type="molecule type" value="Genomic_DNA"/>
</dbReference>
<dbReference type="EMBL" id="CP002688">
    <property type="protein sequence ID" value="AED90775.1"/>
    <property type="molecule type" value="Genomic_DNA"/>
</dbReference>
<dbReference type="EMBL" id="AY050794">
    <property type="protein sequence ID" value="AAK92729.1"/>
    <property type="molecule type" value="mRNA"/>
</dbReference>
<dbReference type="EMBL" id="AY113952">
    <property type="protein sequence ID" value="AAM45000.1"/>
    <property type="molecule type" value="mRNA"/>
</dbReference>
<dbReference type="PIR" id="T48468">
    <property type="entry name" value="T48468"/>
</dbReference>
<dbReference type="RefSeq" id="NP_196092.1">
    <property type="nucleotide sequence ID" value="NM_120554.2"/>
</dbReference>
<dbReference type="SMR" id="Q9LZ25"/>
<dbReference type="FunCoup" id="Q9LZ25">
    <property type="interactions" value="1484"/>
</dbReference>
<dbReference type="STRING" id="3702.Q9LZ25"/>
<dbReference type="iPTMnet" id="Q9LZ25"/>
<dbReference type="PaxDb" id="3702-AT5G04720.1"/>
<dbReference type="ProteomicsDB" id="224328"/>
<dbReference type="EnsemblPlants" id="AT5G04720.1">
    <property type="protein sequence ID" value="AT5G04720.1"/>
    <property type="gene ID" value="AT5G04720"/>
</dbReference>
<dbReference type="GeneID" id="830350"/>
<dbReference type="Gramene" id="AT5G04720.1">
    <property type="protein sequence ID" value="AT5G04720.1"/>
    <property type="gene ID" value="AT5G04720"/>
</dbReference>
<dbReference type="KEGG" id="ath:AT5G04720"/>
<dbReference type="Araport" id="AT5G04720"/>
<dbReference type="TAIR" id="AT5G04720">
    <property type="gene designation" value="ADR1-L2"/>
</dbReference>
<dbReference type="eggNOG" id="ENOG502QU6E">
    <property type="taxonomic scope" value="Eukaryota"/>
</dbReference>
<dbReference type="HOGENOM" id="CLU_012216_1_0_1"/>
<dbReference type="InParanoid" id="Q9LZ25"/>
<dbReference type="OMA" id="ECKGEAQ"/>
<dbReference type="OrthoDB" id="1357022at2759"/>
<dbReference type="PhylomeDB" id="Q9LZ25"/>
<dbReference type="PHI-base" id="PHI:2390"/>
<dbReference type="PRO" id="PR:Q9LZ25"/>
<dbReference type="Proteomes" id="UP000006548">
    <property type="component" value="Chromosome 5"/>
</dbReference>
<dbReference type="ExpressionAtlas" id="Q9LZ25">
    <property type="expression patterns" value="baseline and differential"/>
</dbReference>
<dbReference type="GO" id="GO:0043531">
    <property type="term" value="F:ADP binding"/>
    <property type="evidence" value="ECO:0007669"/>
    <property type="project" value="InterPro"/>
</dbReference>
<dbReference type="GO" id="GO:0005524">
    <property type="term" value="F:ATP binding"/>
    <property type="evidence" value="ECO:0007669"/>
    <property type="project" value="UniProtKB-KW"/>
</dbReference>
<dbReference type="GO" id="GO:0016887">
    <property type="term" value="F:ATP hydrolysis activity"/>
    <property type="evidence" value="ECO:0007669"/>
    <property type="project" value="InterPro"/>
</dbReference>
<dbReference type="GO" id="GO:0007166">
    <property type="term" value="P:cell surface receptor signaling pathway"/>
    <property type="evidence" value="ECO:0007669"/>
    <property type="project" value="InterPro"/>
</dbReference>
<dbReference type="GO" id="GO:0042742">
    <property type="term" value="P:defense response to bacterium"/>
    <property type="evidence" value="ECO:0000316"/>
    <property type="project" value="TAIR"/>
</dbReference>
<dbReference type="CDD" id="cd00267">
    <property type="entry name" value="ABC_ATPase"/>
    <property type="match status" value="1"/>
</dbReference>
<dbReference type="FunFam" id="3.80.10.10:FF:001428">
    <property type="entry name" value="Probable disease resistance protein At5g04720"/>
    <property type="match status" value="1"/>
</dbReference>
<dbReference type="FunFam" id="3.80.10.10:FF:002186">
    <property type="entry name" value="Probable disease resistance protein At5g04720"/>
    <property type="match status" value="1"/>
</dbReference>
<dbReference type="FunFam" id="1.10.8.430:FF:000003">
    <property type="entry name" value="Probable disease resistance protein At5g66910"/>
    <property type="match status" value="1"/>
</dbReference>
<dbReference type="Gene3D" id="1.20.930.20">
    <property type="entry name" value="Adaptor protein Cbl, N-terminal domain"/>
    <property type="match status" value="1"/>
</dbReference>
<dbReference type="Gene3D" id="1.10.8.430">
    <property type="entry name" value="Helical domain of apoptotic protease-activating factors"/>
    <property type="match status" value="1"/>
</dbReference>
<dbReference type="Gene3D" id="3.40.50.300">
    <property type="entry name" value="P-loop containing nucleotide triphosphate hydrolases"/>
    <property type="match status" value="1"/>
</dbReference>
<dbReference type="Gene3D" id="3.80.10.10">
    <property type="entry name" value="Ribonuclease Inhibitor"/>
    <property type="match status" value="2"/>
</dbReference>
<dbReference type="Gene3D" id="1.10.10.10">
    <property type="entry name" value="Winged helix-like DNA-binding domain superfamily/Winged helix DNA-binding domain"/>
    <property type="match status" value="1"/>
</dbReference>
<dbReference type="InterPro" id="IPR003593">
    <property type="entry name" value="AAA+_ATPase"/>
</dbReference>
<dbReference type="InterPro" id="IPR036537">
    <property type="entry name" value="Adaptor_Cbl_N_dom_sf"/>
</dbReference>
<dbReference type="InterPro" id="IPR042197">
    <property type="entry name" value="Apaf_helical"/>
</dbReference>
<dbReference type="InterPro" id="IPR032675">
    <property type="entry name" value="LRR_dom_sf"/>
</dbReference>
<dbReference type="InterPro" id="IPR055414">
    <property type="entry name" value="LRR_R13L4/SHOC2-like"/>
</dbReference>
<dbReference type="InterPro" id="IPR002182">
    <property type="entry name" value="NB-ARC"/>
</dbReference>
<dbReference type="InterPro" id="IPR027417">
    <property type="entry name" value="P-loop_NTPase"/>
</dbReference>
<dbReference type="InterPro" id="IPR008808">
    <property type="entry name" value="Powdery_mildew-R_dom"/>
</dbReference>
<dbReference type="InterPro" id="IPR036388">
    <property type="entry name" value="WH-like_DNA-bd_sf"/>
</dbReference>
<dbReference type="PANTHER" id="PTHR36766:SF25">
    <property type="entry name" value="DISEASE RESISTANCE PROTEIN ADR1"/>
    <property type="match status" value="1"/>
</dbReference>
<dbReference type="PANTHER" id="PTHR36766">
    <property type="entry name" value="PLANT BROAD-SPECTRUM MILDEW RESISTANCE PROTEIN RPW8"/>
    <property type="match status" value="1"/>
</dbReference>
<dbReference type="Pfam" id="PF23598">
    <property type="entry name" value="LRR_14"/>
    <property type="match status" value="1"/>
</dbReference>
<dbReference type="Pfam" id="PF00931">
    <property type="entry name" value="NB-ARC"/>
    <property type="match status" value="1"/>
</dbReference>
<dbReference type="Pfam" id="PF05659">
    <property type="entry name" value="RPW8"/>
    <property type="match status" value="1"/>
</dbReference>
<dbReference type="PRINTS" id="PR00364">
    <property type="entry name" value="DISEASERSIST"/>
</dbReference>
<dbReference type="SMART" id="SM00382">
    <property type="entry name" value="AAA"/>
    <property type="match status" value="1"/>
</dbReference>
<dbReference type="SUPFAM" id="SSF52058">
    <property type="entry name" value="L domain-like"/>
    <property type="match status" value="1"/>
</dbReference>
<dbReference type="SUPFAM" id="SSF52540">
    <property type="entry name" value="P-loop containing nucleoside triphosphate hydrolases"/>
    <property type="match status" value="1"/>
</dbReference>
<dbReference type="PROSITE" id="PS51153">
    <property type="entry name" value="RPW8"/>
    <property type="match status" value="1"/>
</dbReference>
<gene>
    <name type="ordered locus">At5g04720</name>
    <name type="ORF">MUK11.4</name>
    <name type="ORF">T1E3.80</name>
</gene>